<keyword id="KW-0002">3D-structure</keyword>
<keyword id="KW-0903">Direct protein sequencing</keyword>
<keyword id="KW-1015">Disulfide bond</keyword>
<keyword id="KW-0325">Glycoprotein</keyword>
<keyword id="KW-0964">Secreted</keyword>
<keyword id="KW-0732">Signal</keyword>
<comment type="function">
    <text evidence="2 3 4">Salivary chemokine-binding protein which shows chemokine neutralizing activity and binds to host chemokines CXCL1, CXCL2, CXCL3, CXCL5, CXCL6 and CXCL8 (PubMed:18678732, PubMed:31167786, PubMed:31235521). Binds to CXCL8 with 1:1 stoichiometry (PubMed:31235521). Disrupts CXCL8 homodimer formation, disrupts the glycosaminoglycan-binding site of CXCL8 and inhibits the interaction of CXCL8 with CXCR2 (PubMed:31235521).</text>
</comment>
<comment type="subunit">
    <text evidence="2">Monomer.</text>
</comment>
<comment type="subcellular location">
    <subcellularLocation>
        <location evidence="8">Secreted</location>
    </subcellularLocation>
</comment>
<comment type="online information" name="Protein Spotlight">
    <link uri="https://www.proteinspotlight.org/back_issues/099"/>
    <text>Hidden powers - Issue 99 of November 2008</text>
</comment>
<organism>
    <name type="scientific">Rhipicephalus sanguineus</name>
    <name type="common">Brown dog tick</name>
    <name type="synonym">Ixodes sanguineus</name>
    <dbReference type="NCBI Taxonomy" id="34632"/>
    <lineage>
        <taxon>Eukaryota</taxon>
        <taxon>Metazoa</taxon>
        <taxon>Ecdysozoa</taxon>
        <taxon>Arthropoda</taxon>
        <taxon>Chelicerata</taxon>
        <taxon>Arachnida</taxon>
        <taxon>Acari</taxon>
        <taxon>Parasitiformes</taxon>
        <taxon>Ixodida</taxon>
        <taxon>Ixodoidea</taxon>
        <taxon>Ixodidae</taxon>
        <taxon>Rhipicephalinae</taxon>
        <taxon>Rhipicephalus</taxon>
        <taxon>Rhipicephalus</taxon>
    </lineage>
</organism>
<feature type="signal peptide" evidence="2">
    <location>
        <begin position="1"/>
        <end position="20"/>
    </location>
</feature>
<feature type="chain" id="PRO_0000354058" description="Evasin-3">
    <location>
        <begin position="21"/>
        <end position="86"/>
    </location>
</feature>
<feature type="glycosylation site" description="N-linked (GlcNAc...) asparagine" evidence="1">
    <location>
        <position position="45"/>
    </location>
</feature>
<feature type="glycosylation site" description="N-linked (GlcNAc...) asparagine" evidence="1">
    <location>
        <position position="76"/>
    </location>
</feature>
<feature type="disulfide bond" evidence="3 4 9 10">
    <location>
        <begin position="42"/>
        <end position="57"/>
    </location>
</feature>
<feature type="disulfide bond" evidence="3 4 9 10">
    <location>
        <begin position="46"/>
        <end position="59"/>
    </location>
</feature>
<feature type="disulfide bond" evidence="3 4 9 10">
    <location>
        <begin position="53"/>
        <end position="70"/>
    </location>
</feature>
<feature type="helix" evidence="11">
    <location>
        <begin position="34"/>
        <end position="36"/>
    </location>
</feature>
<feature type="strand" evidence="11">
    <location>
        <begin position="37"/>
        <end position="47"/>
    </location>
</feature>
<feature type="turn" evidence="12">
    <location>
        <begin position="48"/>
        <end position="50"/>
    </location>
</feature>
<feature type="strand" evidence="11">
    <location>
        <begin position="58"/>
        <end position="60"/>
    </location>
</feature>
<feature type="strand" evidence="11">
    <location>
        <begin position="66"/>
        <end position="75"/>
    </location>
</feature>
<dbReference type="PDB" id="6I31">
    <property type="method" value="X-ray"/>
    <property type="resolution" value="1.79 A"/>
    <property type="chains" value="A/B=21-86"/>
</dbReference>
<dbReference type="PDB" id="6QJB">
    <property type="method" value="NMR"/>
    <property type="chains" value="A=37-76"/>
</dbReference>
<dbReference type="PDBsum" id="6I31"/>
<dbReference type="PDBsum" id="6QJB"/>
<dbReference type="BMRB" id="P0C8E8"/>
<dbReference type="SMR" id="P0C8E8"/>
<dbReference type="GO" id="GO:0005576">
    <property type="term" value="C:extracellular region"/>
    <property type="evidence" value="ECO:0007669"/>
    <property type="project" value="UniProtKB-SubCell"/>
</dbReference>
<dbReference type="GO" id="GO:0019958">
    <property type="term" value="F:C-X-C chemokine binding"/>
    <property type="evidence" value="ECO:0000314"/>
    <property type="project" value="UniProtKB"/>
</dbReference>
<dbReference type="GO" id="GO:1900137">
    <property type="term" value="P:negative regulation of chemokine activity"/>
    <property type="evidence" value="ECO:0000314"/>
    <property type="project" value="UniProtKB"/>
</dbReference>
<dbReference type="GO" id="GO:0090074">
    <property type="term" value="P:negative regulation of protein homodimerization activity"/>
    <property type="evidence" value="ECO:0000314"/>
    <property type="project" value="UniProtKB"/>
</dbReference>
<sequence length="86" mass="9145">MRALLARLLLCVLVVSDSKGLVSTIESRTSGDGADNFDVVSCNKNCTSGQNECPEGCFCGLLGQNKKGHCYKIIGNLSGEPPVVRR</sequence>
<evidence type="ECO:0000255" key="1"/>
<evidence type="ECO:0000269" key="2">
    <source>
    </source>
</evidence>
<evidence type="ECO:0000269" key="3">
    <source>
    </source>
</evidence>
<evidence type="ECO:0000269" key="4">
    <source>
    </source>
</evidence>
<evidence type="ECO:0000303" key="5">
    <source>
    </source>
</evidence>
<evidence type="ECO:0000303" key="6">
    <source>
    </source>
</evidence>
<evidence type="ECO:0000303" key="7">
    <source>
    </source>
</evidence>
<evidence type="ECO:0000305" key="8"/>
<evidence type="ECO:0007744" key="9">
    <source>
        <dbReference type="PDB" id="6I31"/>
    </source>
</evidence>
<evidence type="ECO:0007744" key="10">
    <source>
        <dbReference type="PDB" id="6QJB"/>
    </source>
</evidence>
<evidence type="ECO:0007829" key="11">
    <source>
        <dbReference type="PDB" id="6I31"/>
    </source>
</evidence>
<evidence type="ECO:0007829" key="12">
    <source>
        <dbReference type="PDB" id="6QJB"/>
    </source>
</evidence>
<name>EVA3_RHISA</name>
<reference key="1">
    <citation type="journal article" date="2008" name="J. Exp. Med.">
        <title>Ticks produce highly selective chemokine binding proteins with antiinflammatory activity.</title>
        <authorList>
            <person name="Deruaz M."/>
            <person name="Frauenschuh A."/>
            <person name="Alessandri A.L."/>
            <person name="Dias J.M."/>
            <person name="Coelho F.M."/>
            <person name="Russo R.C."/>
            <person name="Ferreira B.R."/>
            <person name="Graham G.J."/>
            <person name="Shaw J.P."/>
            <person name="Wells T.N.C."/>
            <person name="Teixeira M.M."/>
            <person name="Power C.A."/>
            <person name="Proudfoot A.E.I."/>
        </authorList>
    </citation>
    <scope>NUCLEOTIDE SEQUENCE [MRNA]</scope>
    <scope>PROTEIN SEQUENCE OF N-TERMINUS</scope>
    <scope>SUBUNIT</scope>
    <scope>FUNCTION</scope>
    <source>
        <tissue>Salivary gland</tissue>
    </source>
</reference>
<reference evidence="9" key="2">
    <citation type="journal article" date="2019" name="J. Biol. Chem.">
        <title>A knottin scaffold directs the CXC-chemokine-binding specificity of tick evasins.</title>
        <authorList>
            <person name="Lee A.W."/>
            <person name="Deruaz M."/>
            <person name="Lynch C."/>
            <person name="Davies G."/>
            <person name="Singh K."/>
            <person name="Alenazi Y."/>
            <person name="Eaton J.R.O."/>
            <person name="Kawamura A."/>
            <person name="Shaw J."/>
            <person name="Proudfoot A.E.I."/>
            <person name="Dias J.M."/>
            <person name="Bhattacharya S."/>
        </authorList>
    </citation>
    <scope>X-RAY CRYSTALLOGRAPHY (1.79 ANGSTROMS) OF 21-86</scope>
    <scope>FUNCTION</scope>
    <scope>DISULFIDE BONDS</scope>
</reference>
<reference evidence="10" key="3">
    <citation type="journal article" date="2019" name="J. Biol. Chem.">
        <title>Tick saliva protein Evasin-3 modulates chemotaxis by disrupting CXCL8 interactions with glycosaminoglycans and CXCR2.</title>
        <authorList>
            <person name="Denisov S.S."/>
            <person name="Ippel J.H."/>
            <person name="Heinzmann A.C.A."/>
            <person name="Koenen R.R."/>
            <person name="Ortega-Gomez A."/>
            <person name="Soehnlein O."/>
            <person name="Hackeng T.M."/>
            <person name="Dijkgraaf I."/>
        </authorList>
    </citation>
    <scope>STRUCTURE BY NMR OF 37-76</scope>
    <scope>FUNCTION</scope>
    <scope>DISULFIDE BONDS</scope>
</reference>
<proteinExistence type="evidence at protein level"/>
<protein>
    <recommendedName>
        <fullName evidence="5 6 7">Evasin-3</fullName>
        <shortName evidence="6">EVA3</shortName>
    </recommendedName>
</protein>
<accession>P0C8E8</accession>